<feature type="chain" id="PRO_0000110781" description="Orotate phosphoribosyltransferase">
    <location>
        <begin position="1"/>
        <end position="187"/>
    </location>
</feature>
<feature type="binding site" evidence="1">
    <location>
        <position position="103"/>
    </location>
    <ligand>
        <name>5-phospho-alpha-D-ribose 1-diphosphate</name>
        <dbReference type="ChEBI" id="CHEBI:58017"/>
        <note>ligand shared between dimeric partners</note>
    </ligand>
</feature>
<feature type="binding site" description="in other chain" evidence="1">
    <location>
        <position position="104"/>
    </location>
    <ligand>
        <name>5-phospho-alpha-D-ribose 1-diphosphate</name>
        <dbReference type="ChEBI" id="CHEBI:58017"/>
        <note>ligand shared between dimeric partners</note>
    </ligand>
</feature>
<feature type="binding site" evidence="1">
    <location>
        <position position="107"/>
    </location>
    <ligand>
        <name>5-phospho-alpha-D-ribose 1-diphosphate</name>
        <dbReference type="ChEBI" id="CHEBI:58017"/>
        <note>ligand shared between dimeric partners</note>
    </ligand>
</feature>
<feature type="binding site" description="in other chain" evidence="1">
    <location>
        <begin position="129"/>
        <end position="137"/>
    </location>
    <ligand>
        <name>5-phospho-alpha-D-ribose 1-diphosphate</name>
        <dbReference type="ChEBI" id="CHEBI:58017"/>
        <note>ligand shared between dimeric partners</note>
    </ligand>
</feature>
<feature type="binding site" evidence="1">
    <location>
        <position position="133"/>
    </location>
    <ligand>
        <name>orotate</name>
        <dbReference type="ChEBI" id="CHEBI:30839"/>
    </ligand>
</feature>
<feature type="binding site" evidence="1">
    <location>
        <position position="161"/>
    </location>
    <ligand>
        <name>orotate</name>
        <dbReference type="ChEBI" id="CHEBI:30839"/>
    </ligand>
</feature>
<dbReference type="EC" id="2.4.2.10" evidence="1"/>
<dbReference type="EMBL" id="AE008384">
    <property type="protein sequence ID" value="AAM29838.1"/>
    <property type="molecule type" value="Genomic_DNA"/>
</dbReference>
<dbReference type="RefSeq" id="WP_011032096.1">
    <property type="nucleotide sequence ID" value="NC_003901.1"/>
</dbReference>
<dbReference type="SMR" id="Q8Q0J4"/>
<dbReference type="GeneID" id="82159119"/>
<dbReference type="KEGG" id="mma:MM_0142"/>
<dbReference type="PATRIC" id="fig|192952.21.peg.164"/>
<dbReference type="eggNOG" id="arCOG00029">
    <property type="taxonomic scope" value="Archaea"/>
</dbReference>
<dbReference type="HOGENOM" id="CLU_074878_2_0_2"/>
<dbReference type="UniPathway" id="UPA00070">
    <property type="reaction ID" value="UER00119"/>
</dbReference>
<dbReference type="Proteomes" id="UP000000595">
    <property type="component" value="Chromosome"/>
</dbReference>
<dbReference type="GO" id="GO:0000287">
    <property type="term" value="F:magnesium ion binding"/>
    <property type="evidence" value="ECO:0007669"/>
    <property type="project" value="UniProtKB-UniRule"/>
</dbReference>
<dbReference type="GO" id="GO:0004588">
    <property type="term" value="F:orotate phosphoribosyltransferase activity"/>
    <property type="evidence" value="ECO:0007669"/>
    <property type="project" value="UniProtKB-UniRule"/>
</dbReference>
<dbReference type="GO" id="GO:0044205">
    <property type="term" value="P:'de novo' UMP biosynthetic process"/>
    <property type="evidence" value="ECO:0007669"/>
    <property type="project" value="UniProtKB-UniRule"/>
</dbReference>
<dbReference type="GO" id="GO:0019856">
    <property type="term" value="P:pyrimidine nucleobase biosynthetic process"/>
    <property type="evidence" value="ECO:0007669"/>
    <property type="project" value="TreeGrafter"/>
</dbReference>
<dbReference type="CDD" id="cd06223">
    <property type="entry name" value="PRTases_typeI"/>
    <property type="match status" value="1"/>
</dbReference>
<dbReference type="FunFam" id="3.40.50.2020:FF:000029">
    <property type="entry name" value="Orotate phosphoribosyltransferase"/>
    <property type="match status" value="1"/>
</dbReference>
<dbReference type="Gene3D" id="3.40.50.2020">
    <property type="match status" value="1"/>
</dbReference>
<dbReference type="HAMAP" id="MF_01208">
    <property type="entry name" value="PyrE"/>
    <property type="match status" value="1"/>
</dbReference>
<dbReference type="InterPro" id="IPR023031">
    <property type="entry name" value="OPRT"/>
</dbReference>
<dbReference type="InterPro" id="IPR004467">
    <property type="entry name" value="Or_phspho_trans_dom"/>
</dbReference>
<dbReference type="InterPro" id="IPR000836">
    <property type="entry name" value="PRibTrfase_dom"/>
</dbReference>
<dbReference type="InterPro" id="IPR029057">
    <property type="entry name" value="PRTase-like"/>
</dbReference>
<dbReference type="NCBIfam" id="TIGR00336">
    <property type="entry name" value="pyrE"/>
    <property type="match status" value="1"/>
</dbReference>
<dbReference type="PANTHER" id="PTHR19278">
    <property type="entry name" value="OROTATE PHOSPHORIBOSYLTRANSFERASE"/>
    <property type="match status" value="1"/>
</dbReference>
<dbReference type="PANTHER" id="PTHR19278:SF9">
    <property type="entry name" value="URIDINE 5'-MONOPHOSPHATE SYNTHASE"/>
    <property type="match status" value="1"/>
</dbReference>
<dbReference type="Pfam" id="PF00156">
    <property type="entry name" value="Pribosyltran"/>
    <property type="match status" value="1"/>
</dbReference>
<dbReference type="SUPFAM" id="SSF53271">
    <property type="entry name" value="PRTase-like"/>
    <property type="match status" value="1"/>
</dbReference>
<name>PYRE_METMA</name>
<accession>Q8Q0J4</accession>
<organism>
    <name type="scientific">Methanosarcina mazei (strain ATCC BAA-159 / DSM 3647 / Goe1 / Go1 / JCM 11833 / OCM 88)</name>
    <name type="common">Methanosarcina frisia</name>
    <dbReference type="NCBI Taxonomy" id="192952"/>
    <lineage>
        <taxon>Archaea</taxon>
        <taxon>Methanobacteriati</taxon>
        <taxon>Methanobacteriota</taxon>
        <taxon>Stenosarchaea group</taxon>
        <taxon>Methanomicrobia</taxon>
        <taxon>Methanosarcinales</taxon>
        <taxon>Methanosarcinaceae</taxon>
        <taxon>Methanosarcina</taxon>
    </lineage>
</organism>
<evidence type="ECO:0000255" key="1">
    <source>
        <dbReference type="HAMAP-Rule" id="MF_01208"/>
    </source>
</evidence>
<gene>
    <name evidence="1" type="primary">pyrE</name>
    <name type="ordered locus">MM_0142</name>
</gene>
<keyword id="KW-0328">Glycosyltransferase</keyword>
<keyword id="KW-0460">Magnesium</keyword>
<keyword id="KW-0665">Pyrimidine biosynthesis</keyword>
<keyword id="KW-0808">Transferase</keyword>
<reference key="1">
    <citation type="journal article" date="2002" name="J. Mol. Microbiol. Biotechnol.">
        <title>The genome of Methanosarcina mazei: evidence for lateral gene transfer between Bacteria and Archaea.</title>
        <authorList>
            <person name="Deppenmeier U."/>
            <person name="Johann A."/>
            <person name="Hartsch T."/>
            <person name="Merkl R."/>
            <person name="Schmitz R.A."/>
            <person name="Martinez-Arias R."/>
            <person name="Henne A."/>
            <person name="Wiezer A."/>
            <person name="Baeumer S."/>
            <person name="Jacobi C."/>
            <person name="Brueggemann H."/>
            <person name="Lienard T."/>
            <person name="Christmann A."/>
            <person name="Boemecke M."/>
            <person name="Steckel S."/>
            <person name="Bhattacharyya A."/>
            <person name="Lykidis A."/>
            <person name="Overbeek R."/>
            <person name="Klenk H.-P."/>
            <person name="Gunsalus R.P."/>
            <person name="Fritz H.-J."/>
            <person name="Gottschalk G."/>
        </authorList>
    </citation>
    <scope>NUCLEOTIDE SEQUENCE [LARGE SCALE GENOMIC DNA]</scope>
    <source>
        <strain>ATCC BAA-159 / DSM 3647 / Goe1 / Go1 / JCM 11833 / OCM 88</strain>
    </source>
</reference>
<proteinExistence type="inferred from homology"/>
<comment type="function">
    <text evidence="1">Catalyzes the transfer of a ribosyl phosphate group from 5-phosphoribose 1-diphosphate to orotate, leading to the formation of orotidine monophosphate (OMP).</text>
</comment>
<comment type="catalytic activity">
    <reaction evidence="1">
        <text>orotidine 5'-phosphate + diphosphate = orotate + 5-phospho-alpha-D-ribose 1-diphosphate</text>
        <dbReference type="Rhea" id="RHEA:10380"/>
        <dbReference type="ChEBI" id="CHEBI:30839"/>
        <dbReference type="ChEBI" id="CHEBI:33019"/>
        <dbReference type="ChEBI" id="CHEBI:57538"/>
        <dbReference type="ChEBI" id="CHEBI:58017"/>
        <dbReference type="EC" id="2.4.2.10"/>
    </reaction>
</comment>
<comment type="cofactor">
    <cofactor evidence="1">
        <name>Mg(2+)</name>
        <dbReference type="ChEBI" id="CHEBI:18420"/>
    </cofactor>
</comment>
<comment type="pathway">
    <text evidence="1">Pyrimidine metabolism; UMP biosynthesis via de novo pathway; UMP from orotate: step 1/2.</text>
</comment>
<comment type="subunit">
    <text evidence="1">Homodimer.</text>
</comment>
<comment type="similarity">
    <text evidence="1">Belongs to the purine/pyrimidine phosphoribosyltransferase family. PyrE subfamily.</text>
</comment>
<sequence length="187" mass="20203">MSKTNSETGNNFEQQKQELIAALKACGAVRYGDFTLASGKKSKYYIDIKKASTDPKTLKIIARQAALRIKEMDVDTVAGVELGGVPLATAVSLETELPLLIVRKSVKDYGTKSRFVGDLKPEDRLVMLEDVTTSGGSVRDAIEVVREAGASLKYVITVVDREEGAGEKLKEADVELVPLVSASDLLK</sequence>
<protein>
    <recommendedName>
        <fullName evidence="1">Orotate phosphoribosyltransferase</fullName>
        <shortName evidence="1">OPRT</shortName>
        <shortName evidence="1">OPRTase</shortName>
        <ecNumber evidence="1">2.4.2.10</ecNumber>
    </recommendedName>
</protein>